<dbReference type="EC" id="2.3.1.117" evidence="1"/>
<dbReference type="EMBL" id="CP000469">
    <property type="protein sequence ID" value="ABK49045.1"/>
    <property type="molecule type" value="Genomic_DNA"/>
</dbReference>
<dbReference type="RefSeq" id="WP_011623395.1">
    <property type="nucleotide sequence ID" value="NC_008577.1"/>
</dbReference>
<dbReference type="SMR" id="A0KZ26"/>
<dbReference type="STRING" id="94122.Shewana3_2818"/>
<dbReference type="GeneID" id="94728756"/>
<dbReference type="KEGG" id="shn:Shewana3_2818"/>
<dbReference type="eggNOG" id="COG2171">
    <property type="taxonomic scope" value="Bacteria"/>
</dbReference>
<dbReference type="HOGENOM" id="CLU_050859_0_1_6"/>
<dbReference type="OrthoDB" id="9775362at2"/>
<dbReference type="UniPathway" id="UPA00034">
    <property type="reaction ID" value="UER00019"/>
</dbReference>
<dbReference type="Proteomes" id="UP000002589">
    <property type="component" value="Chromosome"/>
</dbReference>
<dbReference type="GO" id="GO:0005737">
    <property type="term" value="C:cytoplasm"/>
    <property type="evidence" value="ECO:0007669"/>
    <property type="project" value="UniProtKB-SubCell"/>
</dbReference>
<dbReference type="GO" id="GO:0008666">
    <property type="term" value="F:2,3,4,5-tetrahydropyridine-2,6-dicarboxylate N-succinyltransferase activity"/>
    <property type="evidence" value="ECO:0007669"/>
    <property type="project" value="UniProtKB-UniRule"/>
</dbReference>
<dbReference type="GO" id="GO:0016779">
    <property type="term" value="F:nucleotidyltransferase activity"/>
    <property type="evidence" value="ECO:0007669"/>
    <property type="project" value="TreeGrafter"/>
</dbReference>
<dbReference type="GO" id="GO:0019877">
    <property type="term" value="P:diaminopimelate biosynthetic process"/>
    <property type="evidence" value="ECO:0007669"/>
    <property type="project" value="UniProtKB-UniRule"/>
</dbReference>
<dbReference type="GO" id="GO:0009089">
    <property type="term" value="P:lysine biosynthetic process via diaminopimelate"/>
    <property type="evidence" value="ECO:0007669"/>
    <property type="project" value="UniProtKB-UniRule"/>
</dbReference>
<dbReference type="CDD" id="cd03350">
    <property type="entry name" value="LbH_THP_succinylT"/>
    <property type="match status" value="1"/>
</dbReference>
<dbReference type="Gene3D" id="2.160.10.10">
    <property type="entry name" value="Hexapeptide repeat proteins"/>
    <property type="match status" value="1"/>
</dbReference>
<dbReference type="Gene3D" id="1.10.166.10">
    <property type="entry name" value="Tetrahydrodipicolinate-N-succinyltransferase, N-terminal domain"/>
    <property type="match status" value="1"/>
</dbReference>
<dbReference type="HAMAP" id="MF_00811">
    <property type="entry name" value="DapD"/>
    <property type="match status" value="1"/>
</dbReference>
<dbReference type="InterPro" id="IPR005664">
    <property type="entry name" value="DapD_Trfase_Hexpep_rpt_fam"/>
</dbReference>
<dbReference type="InterPro" id="IPR001451">
    <property type="entry name" value="Hexapep"/>
</dbReference>
<dbReference type="InterPro" id="IPR018357">
    <property type="entry name" value="Hexapep_transf_CS"/>
</dbReference>
<dbReference type="InterPro" id="IPR023180">
    <property type="entry name" value="THP_succinylTrfase_dom1"/>
</dbReference>
<dbReference type="InterPro" id="IPR037133">
    <property type="entry name" value="THP_succinylTrfase_N_sf"/>
</dbReference>
<dbReference type="InterPro" id="IPR011004">
    <property type="entry name" value="Trimer_LpxA-like_sf"/>
</dbReference>
<dbReference type="NCBIfam" id="TIGR00965">
    <property type="entry name" value="dapD"/>
    <property type="match status" value="1"/>
</dbReference>
<dbReference type="NCBIfam" id="NF008808">
    <property type="entry name" value="PRK11830.1"/>
    <property type="match status" value="1"/>
</dbReference>
<dbReference type="PANTHER" id="PTHR19136:SF52">
    <property type="entry name" value="2,3,4,5-TETRAHYDROPYRIDINE-2,6-DICARBOXYLATE N-SUCCINYLTRANSFERASE"/>
    <property type="match status" value="1"/>
</dbReference>
<dbReference type="PANTHER" id="PTHR19136">
    <property type="entry name" value="MOLYBDENUM COFACTOR GUANYLYLTRANSFERASE"/>
    <property type="match status" value="1"/>
</dbReference>
<dbReference type="Pfam" id="PF14602">
    <property type="entry name" value="Hexapep_2"/>
    <property type="match status" value="1"/>
</dbReference>
<dbReference type="Pfam" id="PF14805">
    <property type="entry name" value="THDPS_N_2"/>
    <property type="match status" value="1"/>
</dbReference>
<dbReference type="SUPFAM" id="SSF51161">
    <property type="entry name" value="Trimeric LpxA-like enzymes"/>
    <property type="match status" value="1"/>
</dbReference>
<dbReference type="PROSITE" id="PS00101">
    <property type="entry name" value="HEXAPEP_TRANSFERASES"/>
    <property type="match status" value="1"/>
</dbReference>
<evidence type="ECO:0000255" key="1">
    <source>
        <dbReference type="HAMAP-Rule" id="MF_00811"/>
    </source>
</evidence>
<reference key="1">
    <citation type="submission" date="2006-09" db="EMBL/GenBank/DDBJ databases">
        <title>Complete sequence of chromosome 1 of Shewanella sp. ANA-3.</title>
        <authorList>
            <person name="Copeland A."/>
            <person name="Lucas S."/>
            <person name="Lapidus A."/>
            <person name="Barry K."/>
            <person name="Detter J.C."/>
            <person name="Glavina del Rio T."/>
            <person name="Hammon N."/>
            <person name="Israni S."/>
            <person name="Dalin E."/>
            <person name="Tice H."/>
            <person name="Pitluck S."/>
            <person name="Chertkov O."/>
            <person name="Brettin T."/>
            <person name="Bruce D."/>
            <person name="Han C."/>
            <person name="Tapia R."/>
            <person name="Gilna P."/>
            <person name="Schmutz J."/>
            <person name="Larimer F."/>
            <person name="Land M."/>
            <person name="Hauser L."/>
            <person name="Kyrpides N."/>
            <person name="Kim E."/>
            <person name="Newman D."/>
            <person name="Salticov C."/>
            <person name="Konstantinidis K."/>
            <person name="Klappenback J."/>
            <person name="Tiedje J."/>
            <person name="Richardson P."/>
        </authorList>
    </citation>
    <scope>NUCLEOTIDE SEQUENCE [LARGE SCALE GENOMIC DNA]</scope>
    <source>
        <strain>ANA-3</strain>
    </source>
</reference>
<gene>
    <name evidence="1" type="primary">dapD</name>
    <name type="ordered locus">Shewana3_2818</name>
</gene>
<proteinExistence type="inferred from homology"/>
<organism>
    <name type="scientific">Shewanella sp. (strain ANA-3)</name>
    <dbReference type="NCBI Taxonomy" id="94122"/>
    <lineage>
        <taxon>Bacteria</taxon>
        <taxon>Pseudomonadati</taxon>
        <taxon>Pseudomonadota</taxon>
        <taxon>Gammaproteobacteria</taxon>
        <taxon>Alteromonadales</taxon>
        <taxon>Shewanellaceae</taxon>
        <taxon>Shewanella</taxon>
    </lineage>
</organism>
<sequence>MEALRQRIEAAFEARADITPSTVDASVRNDVQNVINMLDKGELRVAEKIDGQWHVHQWLKKAVLLSFRIFDNAVIDGAETKYFDKVPLKFAEYDEARFKAEAIRVVPSATVRKGSFIGKNTVLMPSYVNLGAYVDEGTMVDTWATVGSCAQIGKNVHLSGGVGIGGVLEPLQAGPTIIEDNCFIGARSEIVEGVVVEEGSVISMGVYIGQSTRIYDRETGEIHYGRVPAGSVVVSGNLPSACGKYSLYAAIIVKKVDAKTRGKVGINELLRIVD</sequence>
<feature type="chain" id="PRO_1000047187" description="2,3,4,5-tetrahydropyridine-2,6-dicarboxylate N-succinyltransferase">
    <location>
        <begin position="1"/>
        <end position="274"/>
    </location>
</feature>
<feature type="binding site" evidence="1">
    <location>
        <position position="104"/>
    </location>
    <ligand>
        <name>substrate</name>
    </ligand>
</feature>
<feature type="binding site" evidence="1">
    <location>
        <position position="141"/>
    </location>
    <ligand>
        <name>substrate</name>
    </ligand>
</feature>
<accession>A0KZ26</accession>
<keyword id="KW-0012">Acyltransferase</keyword>
<keyword id="KW-0028">Amino-acid biosynthesis</keyword>
<keyword id="KW-0963">Cytoplasm</keyword>
<keyword id="KW-0220">Diaminopimelate biosynthesis</keyword>
<keyword id="KW-0457">Lysine biosynthesis</keyword>
<keyword id="KW-0677">Repeat</keyword>
<keyword id="KW-0808">Transferase</keyword>
<protein>
    <recommendedName>
        <fullName evidence="1">2,3,4,5-tetrahydropyridine-2,6-dicarboxylate N-succinyltransferase</fullName>
        <ecNumber evidence="1">2.3.1.117</ecNumber>
    </recommendedName>
    <alternativeName>
        <fullName evidence="1">Tetrahydrodipicolinate N-succinyltransferase</fullName>
        <shortName evidence="1">THDP succinyltransferase</shortName>
        <shortName evidence="1">THP succinyltransferase</shortName>
        <shortName evidence="1">Tetrahydropicolinate succinylase</shortName>
    </alternativeName>
</protein>
<name>DAPD_SHESA</name>
<comment type="catalytic activity">
    <reaction evidence="1">
        <text>(S)-2,3,4,5-tetrahydrodipicolinate + succinyl-CoA + H2O = (S)-2-succinylamino-6-oxoheptanedioate + CoA</text>
        <dbReference type="Rhea" id="RHEA:17325"/>
        <dbReference type="ChEBI" id="CHEBI:15377"/>
        <dbReference type="ChEBI" id="CHEBI:15685"/>
        <dbReference type="ChEBI" id="CHEBI:16845"/>
        <dbReference type="ChEBI" id="CHEBI:57287"/>
        <dbReference type="ChEBI" id="CHEBI:57292"/>
        <dbReference type="EC" id="2.3.1.117"/>
    </reaction>
</comment>
<comment type="pathway">
    <text evidence="1">Amino-acid biosynthesis; L-lysine biosynthesis via DAP pathway; LL-2,6-diaminopimelate from (S)-tetrahydrodipicolinate (succinylase route): step 1/3.</text>
</comment>
<comment type="subunit">
    <text evidence="1">Homotrimer.</text>
</comment>
<comment type="subcellular location">
    <subcellularLocation>
        <location evidence="1">Cytoplasm</location>
    </subcellularLocation>
</comment>
<comment type="similarity">
    <text evidence="1">Belongs to the transferase hexapeptide repeat family.</text>
</comment>